<organism>
    <name type="scientific">Shewanella oneidensis (strain ATCC 700550 / JCM 31522 / CIP 106686 / LMG 19005 / NCIMB 14063 / MR-1)</name>
    <dbReference type="NCBI Taxonomy" id="211586"/>
    <lineage>
        <taxon>Bacteria</taxon>
        <taxon>Pseudomonadati</taxon>
        <taxon>Pseudomonadota</taxon>
        <taxon>Gammaproteobacteria</taxon>
        <taxon>Alteromonadales</taxon>
        <taxon>Shewanellaceae</taxon>
        <taxon>Shewanella</taxon>
    </lineage>
</organism>
<gene>
    <name evidence="1" type="primary">aroQ</name>
    <name type="ordered locus">SO_0512</name>
</gene>
<evidence type="ECO:0000255" key="1">
    <source>
        <dbReference type="HAMAP-Rule" id="MF_00169"/>
    </source>
</evidence>
<comment type="function">
    <text evidence="1">Catalyzes a trans-dehydration via an enolate intermediate.</text>
</comment>
<comment type="catalytic activity">
    <reaction evidence="1">
        <text>3-dehydroquinate = 3-dehydroshikimate + H2O</text>
        <dbReference type="Rhea" id="RHEA:21096"/>
        <dbReference type="ChEBI" id="CHEBI:15377"/>
        <dbReference type="ChEBI" id="CHEBI:16630"/>
        <dbReference type="ChEBI" id="CHEBI:32364"/>
        <dbReference type="EC" id="4.2.1.10"/>
    </reaction>
</comment>
<comment type="pathway">
    <text evidence="1">Metabolic intermediate biosynthesis; chorismate biosynthesis; chorismate from D-erythrose 4-phosphate and phosphoenolpyruvate: step 3/7.</text>
</comment>
<comment type="subunit">
    <text evidence="1">Homododecamer.</text>
</comment>
<comment type="similarity">
    <text evidence="1">Belongs to the type-II 3-dehydroquinase family.</text>
</comment>
<dbReference type="EC" id="4.2.1.10" evidence="1"/>
<dbReference type="EMBL" id="AE014299">
    <property type="protein sequence ID" value="AAN53593.1"/>
    <property type="molecule type" value="Genomic_DNA"/>
</dbReference>
<dbReference type="RefSeq" id="NP_716148.1">
    <property type="nucleotide sequence ID" value="NC_004347.2"/>
</dbReference>
<dbReference type="RefSeq" id="WP_011070855.1">
    <property type="nucleotide sequence ID" value="NC_004347.2"/>
</dbReference>
<dbReference type="SMR" id="Q8EJF5"/>
<dbReference type="STRING" id="211586.SO_0512"/>
<dbReference type="PaxDb" id="211586-SO_0512"/>
<dbReference type="KEGG" id="son:SO_0512"/>
<dbReference type="PATRIC" id="fig|211586.12.peg.493"/>
<dbReference type="eggNOG" id="COG0757">
    <property type="taxonomic scope" value="Bacteria"/>
</dbReference>
<dbReference type="HOGENOM" id="CLU_090968_1_0_6"/>
<dbReference type="OrthoDB" id="9790793at2"/>
<dbReference type="PhylomeDB" id="Q8EJF5"/>
<dbReference type="BioCyc" id="SONE211586:G1GMP-485-MONOMER"/>
<dbReference type="UniPathway" id="UPA00053">
    <property type="reaction ID" value="UER00086"/>
</dbReference>
<dbReference type="Proteomes" id="UP000008186">
    <property type="component" value="Chromosome"/>
</dbReference>
<dbReference type="GO" id="GO:0003855">
    <property type="term" value="F:3-dehydroquinate dehydratase activity"/>
    <property type="evidence" value="ECO:0000318"/>
    <property type="project" value="GO_Central"/>
</dbReference>
<dbReference type="GO" id="GO:0008652">
    <property type="term" value="P:amino acid biosynthetic process"/>
    <property type="evidence" value="ECO:0007669"/>
    <property type="project" value="UniProtKB-KW"/>
</dbReference>
<dbReference type="GO" id="GO:0009073">
    <property type="term" value="P:aromatic amino acid family biosynthetic process"/>
    <property type="evidence" value="ECO:0007669"/>
    <property type="project" value="UniProtKB-KW"/>
</dbReference>
<dbReference type="GO" id="GO:0009423">
    <property type="term" value="P:chorismate biosynthetic process"/>
    <property type="evidence" value="ECO:0007669"/>
    <property type="project" value="UniProtKB-UniRule"/>
</dbReference>
<dbReference type="GO" id="GO:0019631">
    <property type="term" value="P:quinate catabolic process"/>
    <property type="evidence" value="ECO:0000318"/>
    <property type="project" value="GO_Central"/>
</dbReference>
<dbReference type="CDD" id="cd00466">
    <property type="entry name" value="DHQase_II"/>
    <property type="match status" value="1"/>
</dbReference>
<dbReference type="Gene3D" id="3.40.50.9100">
    <property type="entry name" value="Dehydroquinase, class II"/>
    <property type="match status" value="1"/>
</dbReference>
<dbReference type="HAMAP" id="MF_00169">
    <property type="entry name" value="AroQ"/>
    <property type="match status" value="1"/>
</dbReference>
<dbReference type="InterPro" id="IPR001874">
    <property type="entry name" value="DHquinase_II"/>
</dbReference>
<dbReference type="InterPro" id="IPR018509">
    <property type="entry name" value="DHquinase_II_CS"/>
</dbReference>
<dbReference type="InterPro" id="IPR036441">
    <property type="entry name" value="DHquinase_II_sf"/>
</dbReference>
<dbReference type="NCBIfam" id="TIGR01088">
    <property type="entry name" value="aroQ"/>
    <property type="match status" value="1"/>
</dbReference>
<dbReference type="NCBIfam" id="NF003804">
    <property type="entry name" value="PRK05395.1-1"/>
    <property type="match status" value="1"/>
</dbReference>
<dbReference type="NCBIfam" id="NF003805">
    <property type="entry name" value="PRK05395.1-2"/>
    <property type="match status" value="1"/>
</dbReference>
<dbReference type="NCBIfam" id="NF003806">
    <property type="entry name" value="PRK05395.1-3"/>
    <property type="match status" value="1"/>
</dbReference>
<dbReference type="NCBIfam" id="NF003807">
    <property type="entry name" value="PRK05395.1-4"/>
    <property type="match status" value="1"/>
</dbReference>
<dbReference type="PANTHER" id="PTHR21272">
    <property type="entry name" value="CATABOLIC 3-DEHYDROQUINASE"/>
    <property type="match status" value="1"/>
</dbReference>
<dbReference type="PANTHER" id="PTHR21272:SF3">
    <property type="entry name" value="CATABOLIC 3-DEHYDROQUINASE"/>
    <property type="match status" value="1"/>
</dbReference>
<dbReference type="Pfam" id="PF01220">
    <property type="entry name" value="DHquinase_II"/>
    <property type="match status" value="1"/>
</dbReference>
<dbReference type="PIRSF" id="PIRSF001399">
    <property type="entry name" value="DHquinase_II"/>
    <property type="match status" value="1"/>
</dbReference>
<dbReference type="SUPFAM" id="SSF52304">
    <property type="entry name" value="Type II 3-dehydroquinate dehydratase"/>
    <property type="match status" value="1"/>
</dbReference>
<dbReference type="PROSITE" id="PS01029">
    <property type="entry name" value="DEHYDROQUINASE_II"/>
    <property type="match status" value="1"/>
</dbReference>
<reference key="1">
    <citation type="journal article" date="2002" name="Nat. Biotechnol.">
        <title>Genome sequence of the dissimilatory metal ion-reducing bacterium Shewanella oneidensis.</title>
        <authorList>
            <person name="Heidelberg J.F."/>
            <person name="Paulsen I.T."/>
            <person name="Nelson K.E."/>
            <person name="Gaidos E.J."/>
            <person name="Nelson W.C."/>
            <person name="Read T.D."/>
            <person name="Eisen J.A."/>
            <person name="Seshadri R."/>
            <person name="Ward N.L."/>
            <person name="Methe B.A."/>
            <person name="Clayton R.A."/>
            <person name="Meyer T."/>
            <person name="Tsapin A."/>
            <person name="Scott J."/>
            <person name="Beanan M.J."/>
            <person name="Brinkac L.M."/>
            <person name="Daugherty S.C."/>
            <person name="DeBoy R.T."/>
            <person name="Dodson R.J."/>
            <person name="Durkin A.S."/>
            <person name="Haft D.H."/>
            <person name="Kolonay J.F."/>
            <person name="Madupu R."/>
            <person name="Peterson J.D."/>
            <person name="Umayam L.A."/>
            <person name="White O."/>
            <person name="Wolf A.M."/>
            <person name="Vamathevan J.J."/>
            <person name="Weidman J.F."/>
            <person name="Impraim M."/>
            <person name="Lee K."/>
            <person name="Berry K.J."/>
            <person name="Lee C."/>
            <person name="Mueller J."/>
            <person name="Khouri H.M."/>
            <person name="Gill J."/>
            <person name="Utterback T.R."/>
            <person name="McDonald L.A."/>
            <person name="Feldblyum T.V."/>
            <person name="Smith H.O."/>
            <person name="Venter J.C."/>
            <person name="Nealson K.H."/>
            <person name="Fraser C.M."/>
        </authorList>
    </citation>
    <scope>NUCLEOTIDE SEQUENCE [LARGE SCALE GENOMIC DNA]</scope>
    <source>
        <strain>ATCC 700550 / JCM 31522 / CIP 106686 / LMG 19005 / NCIMB 14063 / MR-1</strain>
    </source>
</reference>
<sequence length="146" mass="15961">MNHKVLLINGPNLNLLGRREPSVYGHQTLADIVAQLNEQAQAAGVQLEHIQSNAEFELINAIHATDAQMIIINPAAFTHTSVALRDALLGVDIPFYEVHLSNVHAREPFRHHSYLSDKAIGVICGFGAQGYEFALTAAIKRLKSAT</sequence>
<keyword id="KW-0028">Amino-acid biosynthesis</keyword>
<keyword id="KW-0057">Aromatic amino acid biosynthesis</keyword>
<keyword id="KW-0456">Lyase</keyword>
<keyword id="KW-1185">Reference proteome</keyword>
<name>AROQ_SHEON</name>
<feature type="chain" id="PRO_0000159928" description="3-dehydroquinate dehydratase">
    <location>
        <begin position="1"/>
        <end position="146"/>
    </location>
</feature>
<feature type="active site" description="Proton acceptor" evidence="1">
    <location>
        <position position="24"/>
    </location>
</feature>
<feature type="active site" description="Proton donor" evidence="1">
    <location>
        <position position="99"/>
    </location>
</feature>
<feature type="binding site" evidence="1">
    <location>
        <position position="73"/>
    </location>
    <ligand>
        <name>substrate</name>
    </ligand>
</feature>
<feature type="binding site" evidence="1">
    <location>
        <position position="79"/>
    </location>
    <ligand>
        <name>substrate</name>
    </ligand>
</feature>
<feature type="binding site" evidence="1">
    <location>
        <position position="86"/>
    </location>
    <ligand>
        <name>substrate</name>
    </ligand>
</feature>
<feature type="binding site" evidence="1">
    <location>
        <begin position="100"/>
        <end position="101"/>
    </location>
    <ligand>
        <name>substrate</name>
    </ligand>
</feature>
<feature type="binding site" evidence="1">
    <location>
        <position position="110"/>
    </location>
    <ligand>
        <name>substrate</name>
    </ligand>
</feature>
<feature type="site" description="Transition state stabilizer" evidence="1">
    <location>
        <position position="19"/>
    </location>
</feature>
<accession>Q8EJF5</accession>
<proteinExistence type="inferred from homology"/>
<protein>
    <recommendedName>
        <fullName evidence="1">3-dehydroquinate dehydratase</fullName>
        <shortName evidence="1">3-dehydroquinase</shortName>
        <ecNumber evidence="1">4.2.1.10</ecNumber>
    </recommendedName>
    <alternativeName>
        <fullName evidence="1">Type II DHQase</fullName>
    </alternativeName>
</protein>